<organism>
    <name type="scientific">Vibrio cholerae serotype O1 (strain M66-2)</name>
    <dbReference type="NCBI Taxonomy" id="579112"/>
    <lineage>
        <taxon>Bacteria</taxon>
        <taxon>Pseudomonadati</taxon>
        <taxon>Pseudomonadota</taxon>
        <taxon>Gammaproteobacteria</taxon>
        <taxon>Vibrionales</taxon>
        <taxon>Vibrionaceae</taxon>
        <taxon>Vibrio</taxon>
    </lineage>
</organism>
<comment type="function">
    <text evidence="1">Catalyzes the phosphorylation of the position 2 hydroxy group of 4-diphosphocytidyl-2C-methyl-D-erythritol.</text>
</comment>
<comment type="catalytic activity">
    <reaction evidence="1">
        <text>4-CDP-2-C-methyl-D-erythritol + ATP = 4-CDP-2-C-methyl-D-erythritol 2-phosphate + ADP + H(+)</text>
        <dbReference type="Rhea" id="RHEA:18437"/>
        <dbReference type="ChEBI" id="CHEBI:15378"/>
        <dbReference type="ChEBI" id="CHEBI:30616"/>
        <dbReference type="ChEBI" id="CHEBI:57823"/>
        <dbReference type="ChEBI" id="CHEBI:57919"/>
        <dbReference type="ChEBI" id="CHEBI:456216"/>
        <dbReference type="EC" id="2.7.1.148"/>
    </reaction>
</comment>
<comment type="pathway">
    <text evidence="1">Isoprenoid biosynthesis; isopentenyl diphosphate biosynthesis via DXP pathway; isopentenyl diphosphate from 1-deoxy-D-xylulose 5-phosphate: step 3/6.</text>
</comment>
<comment type="similarity">
    <text evidence="1">Belongs to the GHMP kinase family. IspE subfamily.</text>
</comment>
<proteinExistence type="inferred from homology"/>
<keyword id="KW-0067">ATP-binding</keyword>
<keyword id="KW-0414">Isoprene biosynthesis</keyword>
<keyword id="KW-0418">Kinase</keyword>
<keyword id="KW-0547">Nucleotide-binding</keyword>
<keyword id="KW-0808">Transferase</keyword>
<name>ISPE_VIBCM</name>
<gene>
    <name evidence="1" type="primary">ispE</name>
    <name type="ordered locus">VCM66_2105</name>
</gene>
<protein>
    <recommendedName>
        <fullName evidence="1">4-diphosphocytidyl-2-C-methyl-D-erythritol kinase</fullName>
        <shortName evidence="1">CMK</shortName>
        <ecNumber evidence="1">2.7.1.148</ecNumber>
    </recommendedName>
    <alternativeName>
        <fullName evidence="1">4-(cytidine-5'-diphospho)-2-C-methyl-D-erythritol kinase</fullName>
    </alternativeName>
</protein>
<evidence type="ECO:0000255" key="1">
    <source>
        <dbReference type="HAMAP-Rule" id="MF_00061"/>
    </source>
</evidence>
<sequence length="295" mass="31973">MDAAPMIHGTTVWPSPAKLNLFLYITGRRANGYHDLQTLFQFLDHGDELTITANNSGNITLSPALADVALEDNLIYKAAMALKNAAQSPLGADIQLHKVLPMGGGIGGGSSNAATTLVALNYLWQTGLSDDQLAEIGLALGADVPVFTRGFAAFAEGVGEELSAVEPEEKWYLVVRPAVSIATKDIFTHPQLMRNTPKRDLASLLTTPYENDCEKIVRSLYPEVDKQLSWLLQYAPSRLTGTGSCVFAEFSSRKDAQAVFAQLSDNVLAFVAQGRNVSPLRKTLADYQSAKIRPY</sequence>
<accession>C3LPI7</accession>
<feature type="chain" id="PRO_1000190703" description="4-diphosphocytidyl-2-C-methyl-D-erythritol kinase">
    <location>
        <begin position="1"/>
        <end position="295"/>
    </location>
</feature>
<feature type="active site" evidence="1">
    <location>
        <position position="18"/>
    </location>
</feature>
<feature type="active site" evidence="1">
    <location>
        <position position="143"/>
    </location>
</feature>
<feature type="binding site" evidence="1">
    <location>
        <begin position="101"/>
        <end position="111"/>
    </location>
    <ligand>
        <name>ATP</name>
        <dbReference type="ChEBI" id="CHEBI:30616"/>
    </ligand>
</feature>
<dbReference type="EC" id="2.7.1.148" evidence="1"/>
<dbReference type="EMBL" id="CP001233">
    <property type="protein sequence ID" value="ACP06407.1"/>
    <property type="molecule type" value="Genomic_DNA"/>
</dbReference>
<dbReference type="SMR" id="C3LPI7"/>
<dbReference type="KEGG" id="vcm:VCM66_2105"/>
<dbReference type="HOGENOM" id="CLU_053057_3_0_6"/>
<dbReference type="UniPathway" id="UPA00056">
    <property type="reaction ID" value="UER00094"/>
</dbReference>
<dbReference type="Proteomes" id="UP000001217">
    <property type="component" value="Chromosome I"/>
</dbReference>
<dbReference type="GO" id="GO:0050515">
    <property type="term" value="F:4-(cytidine 5'-diphospho)-2-C-methyl-D-erythritol kinase activity"/>
    <property type="evidence" value="ECO:0007669"/>
    <property type="project" value="UniProtKB-UniRule"/>
</dbReference>
<dbReference type="GO" id="GO:0005524">
    <property type="term" value="F:ATP binding"/>
    <property type="evidence" value="ECO:0007669"/>
    <property type="project" value="UniProtKB-UniRule"/>
</dbReference>
<dbReference type="GO" id="GO:0019288">
    <property type="term" value="P:isopentenyl diphosphate biosynthetic process, methylerythritol 4-phosphate pathway"/>
    <property type="evidence" value="ECO:0007669"/>
    <property type="project" value="UniProtKB-UniRule"/>
</dbReference>
<dbReference type="GO" id="GO:0016114">
    <property type="term" value="P:terpenoid biosynthetic process"/>
    <property type="evidence" value="ECO:0007669"/>
    <property type="project" value="InterPro"/>
</dbReference>
<dbReference type="FunFam" id="3.30.230.10:FF:000022">
    <property type="entry name" value="4-diphosphocytidyl-2-C-methyl-D-erythritol kinase"/>
    <property type="match status" value="1"/>
</dbReference>
<dbReference type="FunFam" id="3.30.70.890:FF:000004">
    <property type="entry name" value="4-diphosphocytidyl-2-C-methyl-D-erythritol kinase"/>
    <property type="match status" value="1"/>
</dbReference>
<dbReference type="Gene3D" id="3.30.230.10">
    <property type="match status" value="1"/>
</dbReference>
<dbReference type="Gene3D" id="3.30.70.890">
    <property type="entry name" value="GHMP kinase, C-terminal domain"/>
    <property type="match status" value="1"/>
</dbReference>
<dbReference type="HAMAP" id="MF_00061">
    <property type="entry name" value="IspE"/>
    <property type="match status" value="1"/>
</dbReference>
<dbReference type="InterPro" id="IPR013750">
    <property type="entry name" value="GHMP_kinase_C_dom"/>
</dbReference>
<dbReference type="InterPro" id="IPR036554">
    <property type="entry name" value="GHMP_kinase_C_sf"/>
</dbReference>
<dbReference type="InterPro" id="IPR006204">
    <property type="entry name" value="GHMP_kinase_N_dom"/>
</dbReference>
<dbReference type="InterPro" id="IPR004424">
    <property type="entry name" value="IspE"/>
</dbReference>
<dbReference type="InterPro" id="IPR020568">
    <property type="entry name" value="Ribosomal_Su5_D2-typ_SF"/>
</dbReference>
<dbReference type="InterPro" id="IPR014721">
    <property type="entry name" value="Ribsml_uS5_D2-typ_fold_subgr"/>
</dbReference>
<dbReference type="NCBIfam" id="TIGR00154">
    <property type="entry name" value="ispE"/>
    <property type="match status" value="1"/>
</dbReference>
<dbReference type="PANTHER" id="PTHR43527">
    <property type="entry name" value="4-DIPHOSPHOCYTIDYL-2-C-METHYL-D-ERYTHRITOL KINASE, CHLOROPLASTIC"/>
    <property type="match status" value="1"/>
</dbReference>
<dbReference type="PANTHER" id="PTHR43527:SF2">
    <property type="entry name" value="4-DIPHOSPHOCYTIDYL-2-C-METHYL-D-ERYTHRITOL KINASE, CHLOROPLASTIC"/>
    <property type="match status" value="1"/>
</dbReference>
<dbReference type="Pfam" id="PF08544">
    <property type="entry name" value="GHMP_kinases_C"/>
    <property type="match status" value="1"/>
</dbReference>
<dbReference type="Pfam" id="PF00288">
    <property type="entry name" value="GHMP_kinases_N"/>
    <property type="match status" value="1"/>
</dbReference>
<dbReference type="PIRSF" id="PIRSF010376">
    <property type="entry name" value="IspE"/>
    <property type="match status" value="1"/>
</dbReference>
<dbReference type="SUPFAM" id="SSF55060">
    <property type="entry name" value="GHMP Kinase, C-terminal domain"/>
    <property type="match status" value="1"/>
</dbReference>
<dbReference type="SUPFAM" id="SSF54211">
    <property type="entry name" value="Ribosomal protein S5 domain 2-like"/>
    <property type="match status" value="1"/>
</dbReference>
<reference key="1">
    <citation type="journal article" date="2008" name="PLoS ONE">
        <title>A recalibrated molecular clock and independent origins for the cholera pandemic clones.</title>
        <authorList>
            <person name="Feng L."/>
            <person name="Reeves P.R."/>
            <person name="Lan R."/>
            <person name="Ren Y."/>
            <person name="Gao C."/>
            <person name="Zhou Z."/>
            <person name="Ren Y."/>
            <person name="Cheng J."/>
            <person name="Wang W."/>
            <person name="Wang J."/>
            <person name="Qian W."/>
            <person name="Li D."/>
            <person name="Wang L."/>
        </authorList>
    </citation>
    <scope>NUCLEOTIDE SEQUENCE [LARGE SCALE GENOMIC DNA]</scope>
    <source>
        <strain>M66-2</strain>
    </source>
</reference>